<comment type="catalytic activity">
    <reaction>
        <text>a carboxylic ester + H2O = an alcohol + a carboxylate + H(+)</text>
        <dbReference type="Rhea" id="RHEA:21164"/>
        <dbReference type="ChEBI" id="CHEBI:15377"/>
        <dbReference type="ChEBI" id="CHEBI:15378"/>
        <dbReference type="ChEBI" id="CHEBI:29067"/>
        <dbReference type="ChEBI" id="CHEBI:30879"/>
        <dbReference type="ChEBI" id="CHEBI:33308"/>
        <dbReference type="EC" id="3.1.1.1"/>
    </reaction>
</comment>
<comment type="subcellular location">
    <subcellularLocation>
        <location evidence="3">Membrane</location>
        <topology evidence="3">Single-pass membrane protein</topology>
    </subcellularLocation>
</comment>
<comment type="similarity">
    <text evidence="3">Belongs to the type-B carboxylesterase/lipase family.</text>
</comment>
<evidence type="ECO:0000250" key="1"/>
<evidence type="ECO:0000255" key="2"/>
<evidence type="ECO:0000305" key="3"/>
<dbReference type="EC" id="3.1.1.1"/>
<dbReference type="EMBL" id="AM398843">
    <property type="protein sequence ID" value="CAL44613.1"/>
    <property type="molecule type" value="Genomic_DNA"/>
</dbReference>
<dbReference type="SMR" id="Q0E588"/>
<dbReference type="KEGG" id="vg:4306180"/>
<dbReference type="OrthoDB" id="29735at10239"/>
<dbReference type="Proteomes" id="UP000008030">
    <property type="component" value="Genome"/>
</dbReference>
<dbReference type="GO" id="GO:0016020">
    <property type="term" value="C:membrane"/>
    <property type="evidence" value="ECO:0007669"/>
    <property type="project" value="UniProtKB-SubCell"/>
</dbReference>
<dbReference type="GO" id="GO:0106435">
    <property type="term" value="F:carboxylesterase activity"/>
    <property type="evidence" value="ECO:0007669"/>
    <property type="project" value="UniProtKB-EC"/>
</dbReference>
<dbReference type="Gene3D" id="3.40.50.1820">
    <property type="entry name" value="alpha/beta hydrolase"/>
    <property type="match status" value="1"/>
</dbReference>
<dbReference type="InterPro" id="IPR029058">
    <property type="entry name" value="AB_hydrolase_fold"/>
</dbReference>
<dbReference type="InterPro" id="IPR002018">
    <property type="entry name" value="CarbesteraseB"/>
</dbReference>
<dbReference type="InterPro" id="IPR050309">
    <property type="entry name" value="Type-B_Carboxylest/Lipase"/>
</dbReference>
<dbReference type="PANTHER" id="PTHR11559">
    <property type="entry name" value="CARBOXYLESTERASE"/>
    <property type="match status" value="1"/>
</dbReference>
<dbReference type="Pfam" id="PF00135">
    <property type="entry name" value="COesterase"/>
    <property type="match status" value="1"/>
</dbReference>
<dbReference type="SUPFAM" id="SSF53474">
    <property type="entry name" value="alpha/beta-Hydrolases"/>
    <property type="match status" value="1"/>
</dbReference>
<feature type="chain" id="PRO_0000330603" description="Putative esterase">
    <location>
        <begin position="1"/>
        <end position="592"/>
    </location>
</feature>
<feature type="transmembrane region" description="Helical" evidence="2">
    <location>
        <begin position="12"/>
        <end position="32"/>
    </location>
</feature>
<feature type="active site" description="Charge relay system" evidence="1">
    <location>
        <position position="513"/>
    </location>
</feature>
<feature type="glycosylation site" description="N-linked (GlcNAc...) asparagine; by host" evidence="2">
    <location>
        <position position="68"/>
    </location>
</feature>
<feature type="glycosylation site" description="N-linked (GlcNAc...) asparagine; by host" evidence="2">
    <location>
        <position position="83"/>
    </location>
</feature>
<feature type="glycosylation site" description="N-linked (GlcNAc...) asparagine; by host" evidence="2">
    <location>
        <position position="95"/>
    </location>
</feature>
<feature type="glycosylation site" description="N-linked (GlcNAc...) asparagine; by host" evidence="2">
    <location>
        <position position="447"/>
    </location>
</feature>
<feature type="glycosylation site" description="N-linked (GlcNAc...) asparagine; by host" evidence="2">
    <location>
        <position position="510"/>
    </location>
</feature>
<feature type="glycosylation site" description="N-linked (GlcNAc...) asparagine; by host" evidence="2">
    <location>
        <position position="528"/>
    </location>
</feature>
<accession>Q0E588</accession>
<organismHost>
    <name type="scientific">Spodoptera frugiperda</name>
    <name type="common">Fall armyworm</name>
    <dbReference type="NCBI Taxonomy" id="7108"/>
</organismHost>
<keyword id="KW-0325">Glycoprotein</keyword>
<keyword id="KW-0378">Hydrolase</keyword>
<keyword id="KW-0472">Membrane</keyword>
<keyword id="KW-1185">Reference proteome</keyword>
<keyword id="KW-0812">Transmembrane</keyword>
<keyword id="KW-1133">Transmembrane helix</keyword>
<gene>
    <name type="ORF">ORF13</name>
</gene>
<organism>
    <name type="scientific">Spodoptera frugiperda ascovirus 1a</name>
    <name type="common">SfAV-1a</name>
    <dbReference type="NCBI Taxonomy" id="113370"/>
    <lineage>
        <taxon>Viruses</taxon>
        <taxon>Varidnaviria</taxon>
        <taxon>Bamfordvirae</taxon>
        <taxon>Nucleocytoviricota</taxon>
        <taxon>Megaviricetes</taxon>
        <taxon>Pimascovirales</taxon>
        <taxon>Ascoviridae</taxon>
        <taxon>Ascovirus</taxon>
        <taxon>Ascovirus sfav1a</taxon>
    </lineage>
</organism>
<reference key="1">
    <citation type="journal article" date="2006" name="J. Virol.">
        <title>Genomic sequence of Spodoptera frugiperda Ascovirus 1a, an enveloped, double-stranded DNA insect virus that manipulates apoptosis for viral reproduction.</title>
        <authorList>
            <person name="Bideshi D.K."/>
            <person name="Demattei M.V."/>
            <person name="Rouleux-Bonnin F."/>
            <person name="Stasiak K."/>
            <person name="Tan Y."/>
            <person name="Bigot S."/>
            <person name="Bigot Y."/>
            <person name="Federici B.A."/>
        </authorList>
    </citation>
    <scope>NUCLEOTIDE SEQUENCE [LARGE SCALE GENOMIC DNA]</scope>
</reference>
<name>ESTE_SFAVA</name>
<protein>
    <recommendedName>
        <fullName>Putative esterase</fullName>
        <ecNumber>3.1.1.1</ecNumber>
    </recommendedName>
</protein>
<sequence>MCVNRVRSIVSLTLIAYLSVLMGVSVYFYVLIESVYQQFSDMSENYVQLVKDTSSTPIVVATHGHSTNRSHQSVLFTARADVNISMETILHVEFNYTTALGTMDDTFNIINFYGLKYRHVDLIDPFGNSLPVVNSKSSFGFTDCSSDERVRCPSTRRPFTGTLDCLTLDMHMQSWNRDRSTDHFKRPIIIWLGEIMGSLWRLIGNGVIVIRVNYRRGVYGFVCHRDERLPYYNQGVNDVMHAIEWVTENAERFAGDTKRITLAGHGDDGKVVEYVRMYHSHHLPLDKYIVMSAAETGSRDLTCSSNSNILVTAARILGMPSVPVHDTTAGERGVYDAVRYLSFIEPKRLMERLYDLKEIFQPCPGEIRSTASDVNGLGKAFEGVDSDDCKFINTDTPVLYMNTLNEYANKVKLDDSFMHARAHTLRRVIEHVLARRFKPHRVTRYCNVTISEPAEIGSERYEPCDGEVINVESLGRVLTDFEYIAPTSRICEAAVGCGASFYHYVYDFKNASHGDDLRLLMSEHDQRNLTKFERQLADGIGMMISRFVRRGYPVVKRDNWCSSTSLVAQIMEINTTPNVITTQTQVRGTVER</sequence>
<proteinExistence type="inferred from homology"/>